<feature type="chain" id="PRO_1000211958" description="Tryptophanase">
    <location>
        <begin position="1"/>
        <end position="471"/>
    </location>
</feature>
<feature type="modified residue" description="N6-acetyllysine" evidence="1">
    <location>
        <position position="5"/>
    </location>
</feature>
<feature type="modified residue" description="N6-acetyllysine" evidence="1">
    <location>
        <position position="115"/>
    </location>
</feature>
<feature type="modified residue" description="N6-acetyllysine" evidence="1">
    <location>
        <position position="156"/>
    </location>
</feature>
<feature type="modified residue" description="N6-(pyridoxal phosphate)lysine" evidence="1">
    <location>
        <position position="270"/>
    </location>
</feature>
<feature type="modified residue" description="N6-acetyllysine" evidence="1">
    <location>
        <position position="450"/>
    </location>
</feature>
<sequence>MENFKHLPEPFRIRVIEPVKRTTRAYREEAIIKSGMNPFLLDSEDVFIDLLTDSGTGAVTQSMQAAMMRGDEAYSGSRSYYALAESVKNIFGYQYTIPTHQGRGAEQIYIPVLIKKREQEKGLDRSKMVAFSNYFFDTTQGHSQINGCTVRNVYIKEAFDTGVRYDFKGNFDLEGLERGIEEVGPNNVPYIVATITSNSAGGQPVSLANLKAMYSIAKKYDIPVVMDSARFAENAYFIKQREAEYKDWTIEQITRETYKYADMLAMSAKKDAMVPMGGLLCMKDDSFFDVYTECRTLCVVQEGFPTYGGLEGGAMERLAVGLYDGMNLDWLAYRIAQVQYLVDGLEEIGVVCQQAGGHAAFVDAGKLLPHIPADQFPAQALACELYKVAGIRAVEIGSFLLGRDPKTGKQLPCPAELLRLTIPRATYTQTHMDFIIEAFKHVKENAANIKGLTFTYEPKVLRHFTAKLKEV</sequence>
<gene>
    <name evidence="1" type="primary">tnaA</name>
    <name type="ordered locus">BWG_3399</name>
</gene>
<comment type="catalytic activity">
    <reaction evidence="1">
        <text>L-tryptophan + H2O = indole + pyruvate + NH4(+)</text>
        <dbReference type="Rhea" id="RHEA:19553"/>
        <dbReference type="ChEBI" id="CHEBI:15361"/>
        <dbReference type="ChEBI" id="CHEBI:15377"/>
        <dbReference type="ChEBI" id="CHEBI:16881"/>
        <dbReference type="ChEBI" id="CHEBI:28938"/>
        <dbReference type="ChEBI" id="CHEBI:57912"/>
        <dbReference type="EC" id="4.1.99.1"/>
    </reaction>
</comment>
<comment type="cofactor">
    <cofactor evidence="1">
        <name>pyridoxal 5'-phosphate</name>
        <dbReference type="ChEBI" id="CHEBI:597326"/>
    </cofactor>
</comment>
<comment type="pathway">
    <text evidence="1">Amino-acid degradation; L-tryptophan degradation via pyruvate pathway; indole and pyruvate from L-tryptophan: step 1/1.</text>
</comment>
<comment type="subunit">
    <text evidence="1">Homotetramer.</text>
</comment>
<comment type="similarity">
    <text evidence="1">Belongs to the beta-eliminating lyase family.</text>
</comment>
<name>TNAA_ECOBW</name>
<protein>
    <recommendedName>
        <fullName evidence="1">Tryptophanase</fullName>
        <ecNumber evidence="1">4.1.99.1</ecNumber>
    </recommendedName>
    <alternativeName>
        <fullName evidence="1">L-tryptophan indole-lyase</fullName>
        <shortName evidence="1">TNase</shortName>
    </alternativeName>
</protein>
<reference key="1">
    <citation type="journal article" date="2009" name="J. Bacteriol.">
        <title>Genomic sequencing reveals regulatory mutations and recombinational events in the widely used MC4100 lineage of Escherichia coli K-12.</title>
        <authorList>
            <person name="Ferenci T."/>
            <person name="Zhou Z."/>
            <person name="Betteridge T."/>
            <person name="Ren Y."/>
            <person name="Liu Y."/>
            <person name="Feng L."/>
            <person name="Reeves P.R."/>
            <person name="Wang L."/>
        </authorList>
    </citation>
    <scope>NUCLEOTIDE SEQUENCE [LARGE SCALE GENOMIC DNA]</scope>
    <source>
        <strain>K12 / MC4100 / BW2952</strain>
    </source>
</reference>
<evidence type="ECO:0000255" key="1">
    <source>
        <dbReference type="HAMAP-Rule" id="MF_00544"/>
    </source>
</evidence>
<accession>C4ZYY6</accession>
<organism>
    <name type="scientific">Escherichia coli (strain K12 / MC4100 / BW2952)</name>
    <dbReference type="NCBI Taxonomy" id="595496"/>
    <lineage>
        <taxon>Bacteria</taxon>
        <taxon>Pseudomonadati</taxon>
        <taxon>Pseudomonadota</taxon>
        <taxon>Gammaproteobacteria</taxon>
        <taxon>Enterobacterales</taxon>
        <taxon>Enterobacteriaceae</taxon>
        <taxon>Escherichia</taxon>
    </lineage>
</organism>
<keyword id="KW-0007">Acetylation</keyword>
<keyword id="KW-0456">Lyase</keyword>
<keyword id="KW-0663">Pyridoxal phosphate</keyword>
<keyword id="KW-0823">Tryptophan catabolism</keyword>
<proteinExistence type="inferred from homology"/>
<dbReference type="EC" id="4.1.99.1" evidence="1"/>
<dbReference type="EMBL" id="CP001396">
    <property type="protein sequence ID" value="ACR65723.1"/>
    <property type="molecule type" value="Genomic_DNA"/>
</dbReference>
<dbReference type="RefSeq" id="WP_001295247.1">
    <property type="nucleotide sequence ID" value="NC_012759.1"/>
</dbReference>
<dbReference type="SMR" id="C4ZYY6"/>
<dbReference type="GeneID" id="75205423"/>
<dbReference type="KEGG" id="ebw:BWG_3399"/>
<dbReference type="HOGENOM" id="CLU_047223_0_0_6"/>
<dbReference type="UniPathway" id="UPA00332">
    <property type="reaction ID" value="UER00452"/>
</dbReference>
<dbReference type="GO" id="GO:0009034">
    <property type="term" value="F:tryptophanase activity"/>
    <property type="evidence" value="ECO:0007669"/>
    <property type="project" value="UniProtKB-UniRule"/>
</dbReference>
<dbReference type="FunFam" id="3.40.640.10:FF:000039">
    <property type="entry name" value="Tryptophanase"/>
    <property type="match status" value="1"/>
</dbReference>
<dbReference type="Gene3D" id="3.90.1150.10">
    <property type="entry name" value="Aspartate Aminotransferase, domain 1"/>
    <property type="match status" value="1"/>
</dbReference>
<dbReference type="Gene3D" id="3.40.640.10">
    <property type="entry name" value="Type I PLP-dependent aspartate aminotransferase-like (Major domain)"/>
    <property type="match status" value="1"/>
</dbReference>
<dbReference type="HAMAP" id="MF_00544">
    <property type="entry name" value="Tryptophanase"/>
    <property type="match status" value="1"/>
</dbReference>
<dbReference type="InterPro" id="IPR001597">
    <property type="entry name" value="ArAA_b-elim_lyase/Thr_aldolase"/>
</dbReference>
<dbReference type="InterPro" id="IPR011166">
    <property type="entry name" value="Beta-eliminating_lyase"/>
</dbReference>
<dbReference type="InterPro" id="IPR015424">
    <property type="entry name" value="PyrdxlP-dep_Trfase"/>
</dbReference>
<dbReference type="InterPro" id="IPR015421">
    <property type="entry name" value="PyrdxlP-dep_Trfase_major"/>
</dbReference>
<dbReference type="InterPro" id="IPR015422">
    <property type="entry name" value="PyrdxlP-dep_Trfase_small"/>
</dbReference>
<dbReference type="InterPro" id="IPR013440">
    <property type="entry name" value="TNase"/>
</dbReference>
<dbReference type="InterPro" id="IPR018176">
    <property type="entry name" value="Tryptophanase_CS"/>
</dbReference>
<dbReference type="NCBIfam" id="NF009709">
    <property type="entry name" value="PRK13238.1"/>
    <property type="match status" value="1"/>
</dbReference>
<dbReference type="NCBIfam" id="TIGR02617">
    <property type="entry name" value="tnaA_trp_ase"/>
    <property type="match status" value="1"/>
</dbReference>
<dbReference type="PANTHER" id="PTHR32325">
    <property type="entry name" value="BETA-ELIMINATING LYASE-LIKE PROTEIN-RELATED"/>
    <property type="match status" value="1"/>
</dbReference>
<dbReference type="PANTHER" id="PTHR32325:SF4">
    <property type="entry name" value="TRYPTOPHANASE"/>
    <property type="match status" value="1"/>
</dbReference>
<dbReference type="Pfam" id="PF01212">
    <property type="entry name" value="Beta_elim_lyase"/>
    <property type="match status" value="1"/>
</dbReference>
<dbReference type="PIRSF" id="PIRSF001386">
    <property type="entry name" value="Trpase"/>
    <property type="match status" value="1"/>
</dbReference>
<dbReference type="SUPFAM" id="SSF53383">
    <property type="entry name" value="PLP-dependent transferases"/>
    <property type="match status" value="1"/>
</dbReference>
<dbReference type="PROSITE" id="PS00853">
    <property type="entry name" value="BETA_ELIM_LYASE"/>
    <property type="match status" value="1"/>
</dbReference>